<reference key="1">
    <citation type="journal article" date="2007" name="Proc. Natl. Acad. Sci. U.S.A.">
        <title>Dandruff-associated Malassezia genomes reveal convergent and divergent virulence traits shared with plant and human fungal pathogens.</title>
        <authorList>
            <person name="Xu J."/>
            <person name="Saunders C.W."/>
            <person name="Hu P."/>
            <person name="Grant R.A."/>
            <person name="Boekhout T."/>
            <person name="Kuramae E.E."/>
            <person name="Kronstad J.W."/>
            <person name="DeAngelis Y.M."/>
            <person name="Reeder N.L."/>
            <person name="Johnstone K.R."/>
            <person name="Leland M."/>
            <person name="Fieno A.M."/>
            <person name="Begley W.M."/>
            <person name="Sun Y."/>
            <person name="Lacey M.P."/>
            <person name="Chaudhary T."/>
            <person name="Keough T."/>
            <person name="Chu L."/>
            <person name="Sears R."/>
            <person name="Yuan B."/>
            <person name="Dawson T.L. Jr."/>
        </authorList>
    </citation>
    <scope>NUCLEOTIDE SEQUENCE [LARGE SCALE GENOMIC DNA]</scope>
    <scope>IDENTIFICATION</scope>
    <scope>FUNCTION</scope>
    <scope>SUBCELLULAR LOCATION</scope>
    <source>
        <strain>ATCC MYA-4612 / CBS 7966</strain>
    </source>
</reference>
<reference key="2">
    <citation type="journal article" date="2016" name="Microbiology">
        <title>Secreted lipases from Malassezia globosa: recombinant expression and determination of their substrate specificities.</title>
        <authorList>
            <person name="Sommer B."/>
            <person name="Overy D.P."/>
            <person name="Haltli B."/>
            <person name="Kerr R.G."/>
        </authorList>
    </citation>
    <scope>FUNCTION</scope>
    <scope>CATALYTIC ACTIVITY</scope>
    <scope>SUBSTRATE SPECIFICITY</scope>
</reference>
<dbReference type="EC" id="3.1.1.-" evidence="4"/>
<dbReference type="EC" id="3.1.1.3" evidence="4"/>
<dbReference type="EMBL" id="AAYY01000018">
    <property type="protein sequence ID" value="EDP41670.1"/>
    <property type="molecule type" value="Genomic_DNA"/>
</dbReference>
<dbReference type="RefSeq" id="XP_001728884.1">
    <property type="nucleotide sequence ID" value="XM_001728832.1"/>
</dbReference>
<dbReference type="SMR" id="A8QCV4"/>
<dbReference type="ESTHER" id="malgo-a8qcv4">
    <property type="family name" value="Fungal-Bact_LIP"/>
</dbReference>
<dbReference type="GeneID" id="5853190"/>
<dbReference type="KEGG" id="mgl:MGL_4051"/>
<dbReference type="VEuPathDB" id="FungiDB:MGL_4051"/>
<dbReference type="InParanoid" id="A8QCV4"/>
<dbReference type="OMA" id="VMGQHGV"/>
<dbReference type="OrthoDB" id="2373480at2759"/>
<dbReference type="Proteomes" id="UP000008837">
    <property type="component" value="Unassembled WGS sequence"/>
</dbReference>
<dbReference type="GO" id="GO:0005576">
    <property type="term" value="C:extracellular region"/>
    <property type="evidence" value="ECO:0007669"/>
    <property type="project" value="UniProtKB-SubCell"/>
</dbReference>
<dbReference type="GO" id="GO:0004806">
    <property type="term" value="F:triacylglycerol lipase activity"/>
    <property type="evidence" value="ECO:0007669"/>
    <property type="project" value="InterPro"/>
</dbReference>
<dbReference type="GO" id="GO:0016042">
    <property type="term" value="P:lipid catabolic process"/>
    <property type="evidence" value="ECO:0007669"/>
    <property type="project" value="UniProtKB-KW"/>
</dbReference>
<dbReference type="Gene3D" id="1.10.260.130">
    <property type="match status" value="1"/>
</dbReference>
<dbReference type="Gene3D" id="3.40.50.1820">
    <property type="entry name" value="alpha/beta hydrolase"/>
    <property type="match status" value="1"/>
</dbReference>
<dbReference type="InterPro" id="IPR029058">
    <property type="entry name" value="AB_hydrolase_fold"/>
</dbReference>
<dbReference type="InterPro" id="IPR005152">
    <property type="entry name" value="Lipase_secreted"/>
</dbReference>
<dbReference type="PANTHER" id="PTHR34853">
    <property type="match status" value="1"/>
</dbReference>
<dbReference type="PANTHER" id="PTHR34853:SF1">
    <property type="entry name" value="LIPASE 5"/>
    <property type="match status" value="1"/>
</dbReference>
<dbReference type="Pfam" id="PF03583">
    <property type="entry name" value="LIP"/>
    <property type="match status" value="1"/>
</dbReference>
<dbReference type="PIRSF" id="PIRSF029171">
    <property type="entry name" value="Esterase_LipA"/>
    <property type="match status" value="1"/>
</dbReference>
<dbReference type="SUPFAM" id="SSF53474">
    <property type="entry name" value="alpha/beta-Hydrolases"/>
    <property type="match status" value="1"/>
</dbReference>
<evidence type="ECO:0000250" key="1">
    <source>
        <dbReference type="UniProtKB" id="W3VKA4"/>
    </source>
</evidence>
<evidence type="ECO:0000255" key="2"/>
<evidence type="ECO:0000269" key="3">
    <source>
    </source>
</evidence>
<evidence type="ECO:0000269" key="4">
    <source>
    </source>
</evidence>
<evidence type="ECO:0000303" key="5">
    <source>
    </source>
</evidence>
<evidence type="ECO:0000305" key="6"/>
<evidence type="ECO:0000305" key="7">
    <source>
    </source>
</evidence>
<accession>A8QCV4</accession>
<protein>
    <recommendedName>
        <fullName evidence="5">Secreted triacylglycerol lipase LIP7</fullName>
        <ecNumber evidence="4">3.1.1.-</ecNumber>
        <ecNumber evidence="4">3.1.1.3</ecNumber>
    </recommendedName>
</protein>
<gene>
    <name evidence="5" type="primary">LIP7</name>
    <name type="ORF">MGL_4051</name>
</gene>
<name>LIP7_MALGO</name>
<keyword id="KW-0134">Cell wall</keyword>
<keyword id="KW-1015">Disulfide bond</keyword>
<keyword id="KW-0378">Hydrolase</keyword>
<keyword id="KW-0442">Lipid degradation</keyword>
<keyword id="KW-0443">Lipid metabolism</keyword>
<keyword id="KW-1185">Reference proteome</keyword>
<keyword id="KW-0964">Secreted</keyword>
<keyword id="KW-0732">Signal</keyword>
<keyword id="KW-0843">Virulence</keyword>
<feature type="signal peptide" evidence="2">
    <location>
        <begin position="1"/>
        <end position="21"/>
    </location>
</feature>
<feature type="chain" id="PRO_5002728162" description="Secreted triacylglycerol lipase LIP7">
    <location>
        <begin position="22"/>
        <end position="468"/>
    </location>
</feature>
<feature type="active site" description="Nucleophile" evidence="7">
    <location>
        <position position="209"/>
    </location>
</feature>
<feature type="active site" evidence="7">
    <location>
        <position position="355"/>
    </location>
</feature>
<feature type="active site" evidence="7">
    <location>
        <position position="389"/>
    </location>
</feature>
<feature type="disulfide bond" evidence="1">
    <location>
        <begin position="125"/>
        <end position="295"/>
    </location>
</feature>
<proteinExistence type="evidence at protein level"/>
<organism>
    <name type="scientific">Malassezia globosa (strain ATCC MYA-4612 / CBS 7966)</name>
    <name type="common">Dandruff-associated fungus</name>
    <dbReference type="NCBI Taxonomy" id="425265"/>
    <lineage>
        <taxon>Eukaryota</taxon>
        <taxon>Fungi</taxon>
        <taxon>Dikarya</taxon>
        <taxon>Basidiomycota</taxon>
        <taxon>Ustilaginomycotina</taxon>
        <taxon>Malasseziomycetes</taxon>
        <taxon>Malasseziales</taxon>
        <taxon>Malasseziaceae</taxon>
        <taxon>Malassezia</taxon>
    </lineage>
</organism>
<sequence length="468" mass="51330">MFPRQILVFAALGLCFALVAGATQVSGVRRWELRRRFSFEDSFYHPPSGWESASPGEVLASRKVDVSPASIFNLGINAYQLLYRTTGLTDGEATTSVTTVLVPYNYDKDKVMVSALYEDSFSSECAPSKQLKSGHFISQNVAVAYQSLFLTTLLHEGWVVTVPDHEGPQNAFGAGPLEGHAILDAVRATINYDRIGLGSNAKVTGYGYSGGAMALGWAASLHKSYASELNVVGWAMGGTVTRMADWLRYIDGTGGAGFAVAALGGISSVDNDLQWVQDNLTPLGKIVLEKSKHSCMYKNLLEEAYKRFISDTYFQGGSTFFENSGAMYALNKYNLGEDGSKVPSAPVFMFHARNDIVVPYAMAQATARSWCQQGAQIRFTTYAGVEMGHTSAGIASLPDVLHFLRDRFNGKQWGETCQYPVVLDPWFNLFNLGESYAEFVQQLLDLLGRRIGKDDHILMAKLKKQEVP</sequence>
<comment type="function">
    <text evidence="3 4">Secreted lipase involved in Dandruff and seborrheic dermatitis (D/SD) probably via lipase-mediated breakdown of sebaceous lipids and release of irritating free fatty acids (PubMed:18000048). Has triacylglycerol lipase activity and is able to hydrolyze triolein (PubMed:27130210). Mostly converts monoolein to di- and triolein, while free fatty acids are only produced in low amounts (PubMed:27130210).</text>
</comment>
<comment type="catalytic activity">
    <reaction evidence="4">
        <text>a triacylglycerol + H2O = a diacylglycerol + a fatty acid + H(+)</text>
        <dbReference type="Rhea" id="RHEA:12044"/>
        <dbReference type="ChEBI" id="CHEBI:15377"/>
        <dbReference type="ChEBI" id="CHEBI:15378"/>
        <dbReference type="ChEBI" id="CHEBI:17855"/>
        <dbReference type="ChEBI" id="CHEBI:18035"/>
        <dbReference type="ChEBI" id="CHEBI:28868"/>
        <dbReference type="EC" id="3.1.1.3"/>
    </reaction>
</comment>
<comment type="catalytic activity">
    <reaction evidence="4">
        <text>a monoacylglycerol + H2O = glycerol + a fatty acid + H(+)</text>
        <dbReference type="Rhea" id="RHEA:15245"/>
        <dbReference type="ChEBI" id="CHEBI:15377"/>
        <dbReference type="ChEBI" id="CHEBI:15378"/>
        <dbReference type="ChEBI" id="CHEBI:17408"/>
        <dbReference type="ChEBI" id="CHEBI:17754"/>
        <dbReference type="ChEBI" id="CHEBI:28868"/>
    </reaction>
</comment>
<comment type="catalytic activity">
    <reaction evidence="4">
        <text>a diacylglycerol + H2O = a monoacylglycerol + a fatty acid + H(+)</text>
        <dbReference type="Rhea" id="RHEA:32731"/>
        <dbReference type="ChEBI" id="CHEBI:15377"/>
        <dbReference type="ChEBI" id="CHEBI:15378"/>
        <dbReference type="ChEBI" id="CHEBI:17408"/>
        <dbReference type="ChEBI" id="CHEBI:18035"/>
        <dbReference type="ChEBI" id="CHEBI:28868"/>
    </reaction>
</comment>
<comment type="subcellular location">
    <subcellularLocation>
        <location evidence="3">Secreted</location>
    </subcellularLocation>
    <subcellularLocation>
        <location evidence="3">Secreted</location>
        <location evidence="3">Cell wall</location>
    </subcellularLocation>
</comment>
<comment type="similarity">
    <text evidence="6">Belongs to the AB hydrolase superfamily. Lipase family. Class Lip subfamily.</text>
</comment>